<protein>
    <recommendedName>
        <fullName>Transforming growth factor beta-3 proprotein</fullName>
    </recommendedName>
    <component>
        <recommendedName>
            <fullName>Latency-associated peptide</fullName>
            <shortName>LAP</shortName>
        </recommendedName>
    </component>
    <component>
        <recommendedName>
            <fullName>Transforming growth factor beta-3</fullName>
            <shortName>TGF-beta-3</shortName>
        </recommendedName>
    </component>
</protein>
<name>TGFB3_RAT</name>
<evidence type="ECO:0000250" key="1">
    <source>
        <dbReference type="UniProtKB" id="P01137"/>
    </source>
</evidence>
<evidence type="ECO:0000250" key="2">
    <source>
        <dbReference type="UniProtKB" id="P04202"/>
    </source>
</evidence>
<evidence type="ECO:0000250" key="3">
    <source>
        <dbReference type="UniProtKB" id="P10600"/>
    </source>
</evidence>
<evidence type="ECO:0000250" key="4">
    <source>
        <dbReference type="UniProtKB" id="P17125"/>
    </source>
</evidence>
<evidence type="ECO:0000255" key="5"/>
<evidence type="ECO:0000269" key="6">
    <source>
    </source>
</evidence>
<evidence type="ECO:0000305" key="7"/>
<comment type="function">
    <text evidence="1 2">Transforming growth factor beta-3 proprotein: Precursor of the Latency-associated peptide (LAP) and Transforming growth factor beta-3 (TGF-beta-3) chains, which constitute the regulatory and active subunit of TGF-beta-3, respectively.</text>
</comment>
<comment type="function">
    <molecule>Latency-associated peptide</molecule>
    <text evidence="1 2 4">Required to maintain the Transforming growth factor beta-3 (TGF-beta-3) chain in a latent state during storage in extracellular matrix (By similarity). Associates non-covalently with TGF-beta-3 and regulates its activation via interaction with 'milieu molecules', such as LTBP1 and LRRC32/GARP, that control activation of TGF-beta-3 (By similarity). Interaction with integrins results in distortion of the Latency-associated peptide chain and subsequent release of the active TGF-beta-3 (By similarity).</text>
</comment>
<comment type="function">
    <text evidence="1 2 4">Transforming growth factor beta-3: Multifunctional protein that regulates embryogenesis and cell differentiation and is required in various processes such as secondary palate development (By similarity). Activation into mature form follows different steps: following cleavage of the proprotein in the Golgi apparatus, Latency-associated peptide (LAP) and Transforming growth factor beta-3 (TGF-beta-3) chains remain non-covalently linked rendering TGF-beta-3 inactive during storage in extracellular matrix (By similarity). At the same time, LAP chain interacts with 'milieu molecules', such as LTBP1 and LRRC32/GARP that control activation of TGF-beta-3 and maintain it in a latent state during storage in extracellular milieus (By similarity). TGF-beta-3 is released from LAP by integrins: integrin-binding results in distortion of the LAP chain and subsequent release of the active TGF-beta-3 (By similarity). Once activated following release of LAP, TGF-beta-3 acts by binding to TGF-beta receptors (TGFBR1 and TGFBR2), which transduce signal (By similarity).</text>
</comment>
<comment type="subunit">
    <text evidence="1 2 3 4">Interacts with ASPN (By similarity). Latency-associated peptide: Homodimer; disulfide-linked. Latency-associated peptide: Interacts with Transforming growth factor beta-3 (TGF-beta-3) chain; interaction is non-covalent and maintains (TGF-beta-3) in a latent state (By similarity). Latency-associated peptide: Interacts with LRRC32/GARP; leading to regulate activation of TGF-beta-3 and promote epithelial fusion during palate development (By similarity). Latency-associated peptide: Interacts (via cell attachment site) with integrins, leading to release of the active TGF-beta-3 (By similarity). Transforming growth factor beta-3: Homodimer; disulfide-linked (By similarity). Transforming growth factor beta-3: Interacts with TGF-beta receptors (TGFBR1 and TGFBR2), leading to signal transduction (By similarity).</text>
</comment>
<comment type="subcellular location">
    <molecule>Latency-associated peptide</molecule>
    <subcellularLocation>
        <location evidence="1">Secreted</location>
        <location evidence="1">Extracellular space</location>
        <location evidence="1">Extracellular matrix</location>
    </subcellularLocation>
</comment>
<comment type="subcellular location">
    <molecule>Transforming growth factor beta-3</molecule>
    <subcellularLocation>
        <location evidence="1">Secreted</location>
    </subcellularLocation>
</comment>
<comment type="tissue specificity">
    <text evidence="6">Expressed in cardiomyocytes.</text>
</comment>
<comment type="PTM">
    <text evidence="1">Transforming growth factor beta-3 proprotein: The precursor proprotein is cleaved in the Golgi apparatus to form Transforming growth factor beta-3 (TGF-beta-3) and Latency-associated peptide (LAP) chains, which remain non-covalently linked, rendering TGF-beta-3 inactive.</text>
</comment>
<comment type="PTM">
    <text evidence="3">Methylated at Gln-293 by N6AMT1.</text>
</comment>
<comment type="similarity">
    <text evidence="7">Belongs to the TGF-beta family.</text>
</comment>
<organism>
    <name type="scientific">Rattus norvegicus</name>
    <name type="common">Rat</name>
    <dbReference type="NCBI Taxonomy" id="10116"/>
    <lineage>
        <taxon>Eukaryota</taxon>
        <taxon>Metazoa</taxon>
        <taxon>Chordata</taxon>
        <taxon>Craniata</taxon>
        <taxon>Vertebrata</taxon>
        <taxon>Euteleostomi</taxon>
        <taxon>Mammalia</taxon>
        <taxon>Eutheria</taxon>
        <taxon>Euarchontoglires</taxon>
        <taxon>Glires</taxon>
        <taxon>Rodentia</taxon>
        <taxon>Myomorpha</taxon>
        <taxon>Muroidea</taxon>
        <taxon>Muridae</taxon>
        <taxon>Murinae</taxon>
        <taxon>Rattus</taxon>
    </lineage>
</organism>
<reference key="1">
    <citation type="journal article" date="1995" name="J. Biol. Chem.">
        <title>Cloning and expression of glucocorticoid-induced genes in fetal rat lung fibroblasts. Transforming growth factor-beta 3.</title>
        <authorList>
            <person name="Wang J."/>
            <person name="Kuliszewski M."/>
            <person name="Yee W."/>
            <person name="Sedlackova L."/>
            <person name="Xu J."/>
            <person name="Tseu I."/>
            <person name="Post M."/>
        </authorList>
    </citation>
    <scope>NUCLEOTIDE SEQUENCE [MRNA]</scope>
    <source>
        <strain>Wistar</strain>
        <tissue>Lung</tissue>
    </source>
</reference>
<reference key="2">
    <citation type="journal article" date="2004" name="Genome Res.">
        <title>The status, quality, and expansion of the NIH full-length cDNA project: the Mammalian Gene Collection (MGC).</title>
        <authorList>
            <consortium name="The MGC Project Team"/>
        </authorList>
    </citation>
    <scope>NUCLEOTIDE SEQUENCE [LARGE SCALE MRNA]</scope>
    <source>
        <tissue>Brain</tissue>
    </source>
</reference>
<reference key="3">
    <citation type="journal article" date="1993" name="J. Cell Biol.">
        <title>A role for TGF-beta in oligodendrocyte differentiation.</title>
        <authorList>
            <person name="McKinnon R.D."/>
            <person name="Piras G."/>
            <person name="Ida J."/>
            <person name="Dubois-Dalq M."/>
        </authorList>
    </citation>
    <scope>NUCLEOTIDE SEQUENCE [MRNA] OF 159-213</scope>
</reference>
<reference key="4">
    <citation type="journal article" date="2016" name="J. Cell Biol.">
        <title>Plakophilin-2 loss promotes TGF-beta1/p38 MAPK-dependent fibrotic gene expression in cardiomyocytes.</title>
        <authorList>
            <person name="Dubash A.D."/>
            <person name="Kam C.Y."/>
            <person name="Aguado B.A."/>
            <person name="Patel D.M."/>
            <person name="Delmar M."/>
            <person name="Shea L.D."/>
            <person name="Green K.J."/>
        </authorList>
    </citation>
    <scope>TISSUE SPECIFICITY</scope>
</reference>
<accession>Q07258</accession>
<accession>Q56A31</accession>
<gene>
    <name type="primary">Tgfb3</name>
    <name type="synonym">Tgf-b3</name>
</gene>
<sequence>MKMHLQRALVVLALLNLATVSLSLSTCTTLDFGHIKKKRVEAIRGQILSKLRLTSPPEPSVMTHVPYQVLALYNSTRELLEEMHGEREEGCTQETSESEYYAKEIHKFDMIQGLAEHNELAVCPKGITSKVFRFNVSSVEKNGTNLFRAEFRVLRVPNPSSKRTEQRIELFQILRPDEHIAKQRYIGGKNLPTRGTAEWLSFDVTDTVREWLLRRESNLGLEISIHCPCHTFQPNGDILENVHEVMEIKFKGVDNEDDHGRGDLGRLKKQKDHHNPHLILMMIPPHRLDSPGQGGQRKKRALDTNYCFRNLEENCCVRPLYIDFRQDLGWKWVHEPKGYYANFCSGPCPYLRSSDTTHSTVLGLYNTLNPEASASPCCVPQDLEPLTILYYVGRTPKVEQLSNMVVKSCKCS</sequence>
<feature type="signal peptide" evidence="5">
    <location>
        <begin position="1"/>
        <end position="23"/>
    </location>
</feature>
<feature type="chain" id="PRO_0000033802" description="Latency-associated peptide" evidence="1">
    <location>
        <begin position="24"/>
        <end position="300"/>
    </location>
</feature>
<feature type="chain" id="PRO_0000033803" description="Transforming growth factor beta-3" evidence="1">
    <location>
        <begin position="301"/>
        <end position="412"/>
    </location>
</feature>
<feature type="short sequence motif" description="Cell attachment site" evidence="1">
    <location>
        <begin position="261"/>
        <end position="263"/>
    </location>
</feature>
<feature type="modified residue" description="N5-methylglutamine" evidence="3">
    <location>
        <position position="293"/>
    </location>
</feature>
<feature type="glycosylation site" description="N-linked (GlcNAc...) asparagine" evidence="5">
    <location>
        <position position="74"/>
    </location>
</feature>
<feature type="glycosylation site" description="N-linked (GlcNAc...) asparagine" evidence="5">
    <location>
        <position position="135"/>
    </location>
</feature>
<feature type="glycosylation site" description="N-linked (GlcNAc...) asparagine" evidence="5">
    <location>
        <position position="142"/>
    </location>
</feature>
<feature type="disulfide bond" evidence="3">
    <location>
        <begin position="307"/>
        <end position="316"/>
    </location>
</feature>
<feature type="disulfide bond" evidence="3">
    <location>
        <begin position="315"/>
        <end position="378"/>
    </location>
</feature>
<feature type="disulfide bond" evidence="3">
    <location>
        <begin position="344"/>
        <end position="409"/>
    </location>
</feature>
<feature type="disulfide bond" evidence="3">
    <location>
        <begin position="348"/>
        <end position="411"/>
    </location>
</feature>
<feature type="disulfide bond" description="Interchain" evidence="3">
    <location>
        <position position="377"/>
    </location>
</feature>
<dbReference type="EMBL" id="U03491">
    <property type="protein sequence ID" value="AAA67915.1"/>
    <property type="molecule type" value="mRNA"/>
</dbReference>
<dbReference type="EMBL" id="BC092195">
    <property type="protein sequence ID" value="AAH92195.1"/>
    <property type="molecule type" value="mRNA"/>
</dbReference>
<dbReference type="EMBL" id="X71903">
    <property type="protein sequence ID" value="CAA50722.1"/>
    <property type="molecule type" value="mRNA"/>
</dbReference>
<dbReference type="PIR" id="A55706">
    <property type="entry name" value="A55706"/>
</dbReference>
<dbReference type="RefSeq" id="NP_037306.1">
    <property type="nucleotide sequence ID" value="NM_013174.2"/>
</dbReference>
<dbReference type="BMRB" id="Q07258"/>
<dbReference type="SMR" id="Q07258"/>
<dbReference type="FunCoup" id="Q07258">
    <property type="interactions" value="631"/>
</dbReference>
<dbReference type="STRING" id="10116.ENSRNOP00000013516"/>
<dbReference type="GlyCosmos" id="Q07258">
    <property type="glycosylation" value="3 sites, No reported glycans"/>
</dbReference>
<dbReference type="GlyGen" id="Q07258">
    <property type="glycosylation" value="3 sites"/>
</dbReference>
<dbReference type="PhosphoSitePlus" id="Q07258"/>
<dbReference type="PaxDb" id="10116-ENSRNOP00000013516"/>
<dbReference type="Ensembl" id="ENSRNOT00000013516.6">
    <property type="protein sequence ID" value="ENSRNOP00000013516.3"/>
    <property type="gene ID" value="ENSRNOG00000009867.6"/>
</dbReference>
<dbReference type="GeneID" id="25717"/>
<dbReference type="KEGG" id="rno:25717"/>
<dbReference type="UCSC" id="RGD:3851">
    <property type="organism name" value="rat"/>
</dbReference>
<dbReference type="AGR" id="RGD:3851"/>
<dbReference type="CTD" id="7043"/>
<dbReference type="RGD" id="3851">
    <property type="gene designation" value="Tgfb3"/>
</dbReference>
<dbReference type="eggNOG" id="KOG3900">
    <property type="taxonomic scope" value="Eukaryota"/>
</dbReference>
<dbReference type="GeneTree" id="ENSGT00940000155747"/>
<dbReference type="HOGENOM" id="CLU_039840_0_0_1"/>
<dbReference type="InParanoid" id="Q07258"/>
<dbReference type="OMA" id="SHMKMYV"/>
<dbReference type="OrthoDB" id="6092228at2759"/>
<dbReference type="PhylomeDB" id="Q07258"/>
<dbReference type="TreeFam" id="TF351793"/>
<dbReference type="Reactome" id="R-RNO-114608">
    <property type="pathway name" value="Platelet degranulation"/>
</dbReference>
<dbReference type="Reactome" id="R-RNO-2129379">
    <property type="pathway name" value="Molecules associated with elastic fibres"/>
</dbReference>
<dbReference type="Reactome" id="R-RNO-2173789">
    <property type="pathway name" value="TGF-beta receptor signaling activates SMADs"/>
</dbReference>
<dbReference type="PRO" id="PR:Q07258"/>
<dbReference type="Proteomes" id="UP000002494">
    <property type="component" value="Chromosome 6"/>
</dbReference>
<dbReference type="Bgee" id="ENSRNOG00000009867">
    <property type="expression patterns" value="Expressed in pancreas and 19 other cell types or tissues"/>
</dbReference>
<dbReference type="GO" id="GO:0009986">
    <property type="term" value="C:cell surface"/>
    <property type="evidence" value="ECO:0000314"/>
    <property type="project" value="RGD"/>
</dbReference>
<dbReference type="GO" id="GO:0031012">
    <property type="term" value="C:extracellular matrix"/>
    <property type="evidence" value="ECO:0000250"/>
    <property type="project" value="AgBase"/>
</dbReference>
<dbReference type="GO" id="GO:0005615">
    <property type="term" value="C:extracellular space"/>
    <property type="evidence" value="ECO:0000314"/>
    <property type="project" value="RGD"/>
</dbReference>
<dbReference type="GO" id="GO:0043025">
    <property type="term" value="C:neuronal cell body"/>
    <property type="evidence" value="ECO:0000314"/>
    <property type="project" value="RGD"/>
</dbReference>
<dbReference type="GO" id="GO:0030141">
    <property type="term" value="C:secretory granule"/>
    <property type="evidence" value="ECO:0000314"/>
    <property type="project" value="RGD"/>
</dbReference>
<dbReference type="GO" id="GO:0030315">
    <property type="term" value="C:T-tubule"/>
    <property type="evidence" value="ECO:0000314"/>
    <property type="project" value="RGD"/>
</dbReference>
<dbReference type="GO" id="GO:0005125">
    <property type="term" value="F:cytokine activity"/>
    <property type="evidence" value="ECO:0000318"/>
    <property type="project" value="GO_Central"/>
</dbReference>
<dbReference type="GO" id="GO:0008083">
    <property type="term" value="F:growth factor activity"/>
    <property type="evidence" value="ECO:0007669"/>
    <property type="project" value="UniProtKB-KW"/>
</dbReference>
<dbReference type="GO" id="GO:0042802">
    <property type="term" value="F:identical protein binding"/>
    <property type="evidence" value="ECO:0000250"/>
    <property type="project" value="AgBase"/>
</dbReference>
<dbReference type="GO" id="GO:0044877">
    <property type="term" value="F:protein-containing complex binding"/>
    <property type="evidence" value="ECO:0000314"/>
    <property type="project" value="RGD"/>
</dbReference>
<dbReference type="GO" id="GO:0050431">
    <property type="term" value="F:transforming growth factor beta binding"/>
    <property type="evidence" value="ECO:0000250"/>
    <property type="project" value="AgBase"/>
</dbReference>
<dbReference type="GO" id="GO:0005160">
    <property type="term" value="F:transforming growth factor beta receptor binding"/>
    <property type="evidence" value="ECO:0000304"/>
    <property type="project" value="RGD"/>
</dbReference>
<dbReference type="GO" id="GO:0034713">
    <property type="term" value="F:type I transforming growth factor beta receptor binding"/>
    <property type="evidence" value="ECO:0000250"/>
    <property type="project" value="AgBase"/>
</dbReference>
<dbReference type="GO" id="GO:0005114">
    <property type="term" value="F:type II transforming growth factor beta receptor binding"/>
    <property type="evidence" value="ECO:0000250"/>
    <property type="project" value="AgBase"/>
</dbReference>
<dbReference type="GO" id="GO:0034714">
    <property type="term" value="F:type III transforming growth factor beta receptor binding"/>
    <property type="evidence" value="ECO:0000250"/>
    <property type="project" value="AgBase"/>
</dbReference>
<dbReference type="GO" id="GO:0009887">
    <property type="term" value="P:animal organ morphogenesis"/>
    <property type="evidence" value="ECO:0000266"/>
    <property type="project" value="RGD"/>
</dbReference>
<dbReference type="GO" id="GO:0008283">
    <property type="term" value="P:cell population proliferation"/>
    <property type="evidence" value="ECO:0000266"/>
    <property type="project" value="RGD"/>
</dbReference>
<dbReference type="GO" id="GO:0045216">
    <property type="term" value="P:cell-cell junction organization"/>
    <property type="evidence" value="ECO:0000250"/>
    <property type="project" value="AgBase"/>
</dbReference>
<dbReference type="GO" id="GO:0071363">
    <property type="term" value="P:cellular response to growth factor stimulus"/>
    <property type="evidence" value="ECO:0000266"/>
    <property type="project" value="RGD"/>
</dbReference>
<dbReference type="GO" id="GO:0070483">
    <property type="term" value="P:detection of hypoxia"/>
    <property type="evidence" value="ECO:0000250"/>
    <property type="project" value="AgBase"/>
</dbReference>
<dbReference type="GO" id="GO:0048565">
    <property type="term" value="P:digestive tract development"/>
    <property type="evidence" value="ECO:0000270"/>
    <property type="project" value="RGD"/>
</dbReference>
<dbReference type="GO" id="GO:0048702">
    <property type="term" value="P:embryonic neurocranium morphogenesis"/>
    <property type="evidence" value="ECO:0000314"/>
    <property type="project" value="RGD"/>
</dbReference>
<dbReference type="GO" id="GO:0050673">
    <property type="term" value="P:epithelial cell proliferation"/>
    <property type="evidence" value="ECO:0000266"/>
    <property type="project" value="RGD"/>
</dbReference>
<dbReference type="GO" id="GO:0060325">
    <property type="term" value="P:face morphogenesis"/>
    <property type="evidence" value="ECO:0000250"/>
    <property type="project" value="AgBase"/>
</dbReference>
<dbReference type="GO" id="GO:0007565">
    <property type="term" value="P:female pregnancy"/>
    <property type="evidence" value="ECO:0000270"/>
    <property type="project" value="RGD"/>
</dbReference>
<dbReference type="GO" id="GO:0046847">
    <property type="term" value="P:filopodium assembly"/>
    <property type="evidence" value="ECO:0000266"/>
    <property type="project" value="RGD"/>
</dbReference>
<dbReference type="GO" id="GO:0060364">
    <property type="term" value="P:frontal suture morphogenesis"/>
    <property type="evidence" value="ECO:0000270"/>
    <property type="project" value="RGD"/>
</dbReference>
<dbReference type="GO" id="GO:0010467">
    <property type="term" value="P:gene expression"/>
    <property type="evidence" value="ECO:0000266"/>
    <property type="project" value="RGD"/>
</dbReference>
<dbReference type="GO" id="GO:0001701">
    <property type="term" value="P:in utero embryonic development"/>
    <property type="evidence" value="ECO:0000266"/>
    <property type="project" value="RGD"/>
</dbReference>
<dbReference type="GO" id="GO:0048839">
    <property type="term" value="P:inner ear development"/>
    <property type="evidence" value="ECO:0000270"/>
    <property type="project" value="RGD"/>
</dbReference>
<dbReference type="GO" id="GO:0048286">
    <property type="term" value="P:lung alveolus development"/>
    <property type="evidence" value="ECO:0000266"/>
    <property type="project" value="RGD"/>
</dbReference>
<dbReference type="GO" id="GO:0030324">
    <property type="term" value="P:lung development"/>
    <property type="evidence" value="ECO:0000303"/>
    <property type="project" value="RGD"/>
</dbReference>
<dbReference type="GO" id="GO:0030879">
    <property type="term" value="P:mammary gland development"/>
    <property type="evidence" value="ECO:0000266"/>
    <property type="project" value="RGD"/>
</dbReference>
<dbReference type="GO" id="GO:0008285">
    <property type="term" value="P:negative regulation of cell population proliferation"/>
    <property type="evidence" value="ECO:0000314"/>
    <property type="project" value="RGD"/>
</dbReference>
<dbReference type="GO" id="GO:0050680">
    <property type="term" value="P:negative regulation of epithelial cell proliferation"/>
    <property type="evidence" value="ECO:0000266"/>
    <property type="project" value="RGD"/>
</dbReference>
<dbReference type="GO" id="GO:0010936">
    <property type="term" value="P:negative regulation of macrophage cytokine production"/>
    <property type="evidence" value="ECO:0000250"/>
    <property type="project" value="AgBase"/>
</dbReference>
<dbReference type="GO" id="GO:0043524">
    <property type="term" value="P:negative regulation of neuron apoptotic process"/>
    <property type="evidence" value="ECO:0000266"/>
    <property type="project" value="RGD"/>
</dbReference>
<dbReference type="GO" id="GO:0030512">
    <property type="term" value="P:negative regulation of transforming growth factor beta receptor signaling pathway"/>
    <property type="evidence" value="ECO:0000314"/>
    <property type="project" value="RGD"/>
</dbReference>
<dbReference type="GO" id="GO:1904706">
    <property type="term" value="P:negative regulation of vascular associated smooth muscle cell proliferation"/>
    <property type="evidence" value="ECO:0000266"/>
    <property type="project" value="RGD"/>
</dbReference>
<dbReference type="GO" id="GO:0051402">
    <property type="term" value="P:neuron apoptotic process"/>
    <property type="evidence" value="ECO:0000266"/>
    <property type="project" value="RGD"/>
</dbReference>
<dbReference type="GO" id="GO:0043065">
    <property type="term" value="P:positive regulation of apoptotic process"/>
    <property type="evidence" value="ECO:0000314"/>
    <property type="project" value="RGD"/>
</dbReference>
<dbReference type="GO" id="GO:0051781">
    <property type="term" value="P:positive regulation of cell division"/>
    <property type="evidence" value="ECO:0007669"/>
    <property type="project" value="UniProtKB-KW"/>
</dbReference>
<dbReference type="GO" id="GO:0008284">
    <property type="term" value="P:positive regulation of cell population proliferation"/>
    <property type="evidence" value="ECO:0000250"/>
    <property type="project" value="AgBase"/>
</dbReference>
<dbReference type="GO" id="GO:0032967">
    <property type="term" value="P:positive regulation of collagen biosynthetic process"/>
    <property type="evidence" value="ECO:0000250"/>
    <property type="project" value="AgBase"/>
</dbReference>
<dbReference type="GO" id="GO:0045893">
    <property type="term" value="P:positive regulation of DNA-templated transcription"/>
    <property type="evidence" value="ECO:0000250"/>
    <property type="project" value="AgBase"/>
</dbReference>
<dbReference type="GO" id="GO:0010718">
    <property type="term" value="P:positive regulation of epithelial to mesenchymal transition"/>
    <property type="evidence" value="ECO:0000250"/>
    <property type="project" value="AgBase"/>
</dbReference>
<dbReference type="GO" id="GO:0051491">
    <property type="term" value="P:positive regulation of filopodium assembly"/>
    <property type="evidence" value="ECO:0000266"/>
    <property type="project" value="RGD"/>
</dbReference>
<dbReference type="GO" id="GO:0010628">
    <property type="term" value="P:positive regulation of gene expression"/>
    <property type="evidence" value="ECO:0000266"/>
    <property type="project" value="RGD"/>
</dbReference>
<dbReference type="GO" id="GO:0043410">
    <property type="term" value="P:positive regulation of MAPK cascade"/>
    <property type="evidence" value="ECO:0000314"/>
    <property type="project" value="RGD"/>
</dbReference>
<dbReference type="GO" id="GO:0050714">
    <property type="term" value="P:positive regulation of protein secretion"/>
    <property type="evidence" value="ECO:0000266"/>
    <property type="project" value="RGD"/>
</dbReference>
<dbReference type="GO" id="GO:0060391">
    <property type="term" value="P:positive regulation of SMAD protein signal transduction"/>
    <property type="evidence" value="ECO:0000266"/>
    <property type="project" value="RGD"/>
</dbReference>
<dbReference type="GO" id="GO:0051496">
    <property type="term" value="P:positive regulation of stress fiber assembly"/>
    <property type="evidence" value="ECO:0000266"/>
    <property type="project" value="RGD"/>
</dbReference>
<dbReference type="GO" id="GO:1905075">
    <property type="term" value="P:positive regulation of tight junction disassembly"/>
    <property type="evidence" value="ECO:0000266"/>
    <property type="project" value="RGD"/>
</dbReference>
<dbReference type="GO" id="GO:0045944">
    <property type="term" value="P:positive regulation of transcription by RNA polymerase II"/>
    <property type="evidence" value="ECO:0000266"/>
    <property type="project" value="RGD"/>
</dbReference>
<dbReference type="GO" id="GO:0042127">
    <property type="term" value="P:regulation of cell population proliferation"/>
    <property type="evidence" value="ECO:0000318"/>
    <property type="project" value="GO_Central"/>
</dbReference>
<dbReference type="GO" id="GO:0045601">
    <property type="term" value="P:regulation of endothelial cell differentiation"/>
    <property type="evidence" value="ECO:0000304"/>
    <property type="project" value="RGD"/>
</dbReference>
<dbReference type="GO" id="GO:0030856">
    <property type="term" value="P:regulation of epithelial cell differentiation"/>
    <property type="evidence" value="ECO:0000304"/>
    <property type="project" value="RGD"/>
</dbReference>
<dbReference type="GO" id="GO:0050678">
    <property type="term" value="P:regulation of epithelial cell proliferation"/>
    <property type="evidence" value="ECO:0000304"/>
    <property type="project" value="RGD"/>
</dbReference>
<dbReference type="GO" id="GO:0043627">
    <property type="term" value="P:response to estrogen"/>
    <property type="evidence" value="ECO:0000314"/>
    <property type="project" value="RGD"/>
</dbReference>
<dbReference type="GO" id="GO:0001666">
    <property type="term" value="P:response to hypoxia"/>
    <property type="evidence" value="ECO:0000270"/>
    <property type="project" value="RGD"/>
</dbReference>
<dbReference type="GO" id="GO:0034616">
    <property type="term" value="P:response to laminar fluid shear stress"/>
    <property type="evidence" value="ECO:0000270"/>
    <property type="project" value="RGD"/>
</dbReference>
<dbReference type="GO" id="GO:0032570">
    <property type="term" value="P:response to progesterone"/>
    <property type="evidence" value="ECO:0000250"/>
    <property type="project" value="AgBase"/>
</dbReference>
<dbReference type="GO" id="GO:0060021">
    <property type="term" value="P:roof of mouth development"/>
    <property type="evidence" value="ECO:0000266"/>
    <property type="project" value="RGD"/>
</dbReference>
<dbReference type="GO" id="GO:0007435">
    <property type="term" value="P:salivary gland morphogenesis"/>
    <property type="evidence" value="ECO:0000250"/>
    <property type="project" value="AgBase"/>
</dbReference>
<dbReference type="GO" id="GO:0062009">
    <property type="term" value="P:secondary palate development"/>
    <property type="evidence" value="ECO:0000250"/>
    <property type="project" value="UniProtKB"/>
</dbReference>
<dbReference type="GO" id="GO:0007179">
    <property type="term" value="P:transforming growth factor beta receptor signaling pathway"/>
    <property type="evidence" value="ECO:0000250"/>
    <property type="project" value="AgBase"/>
</dbReference>
<dbReference type="CDD" id="cd19386">
    <property type="entry name" value="TGF_beta_TGFB3"/>
    <property type="match status" value="1"/>
</dbReference>
<dbReference type="FunFam" id="2.10.90.10:FF:000004">
    <property type="entry name" value="Transforming growth factor beta"/>
    <property type="match status" value="1"/>
</dbReference>
<dbReference type="FunFam" id="2.60.120.970:FF:000006">
    <property type="entry name" value="Transforming growth factor beta"/>
    <property type="match status" value="1"/>
</dbReference>
<dbReference type="Gene3D" id="2.60.120.970">
    <property type="match status" value="1"/>
</dbReference>
<dbReference type="Gene3D" id="2.10.90.10">
    <property type="entry name" value="Cystine-knot cytokines"/>
    <property type="match status" value="1"/>
</dbReference>
<dbReference type="InterPro" id="IPR029034">
    <property type="entry name" value="Cystine-knot_cytokine"/>
</dbReference>
<dbReference type="InterPro" id="IPR001839">
    <property type="entry name" value="TGF-b_C"/>
</dbReference>
<dbReference type="InterPro" id="IPR001111">
    <property type="entry name" value="TGF-b_propeptide"/>
</dbReference>
<dbReference type="InterPro" id="IPR016319">
    <property type="entry name" value="TGF-beta"/>
</dbReference>
<dbReference type="InterPro" id="IPR015615">
    <property type="entry name" value="TGF-beta-rel"/>
</dbReference>
<dbReference type="InterPro" id="IPR015618">
    <property type="entry name" value="TGFB3"/>
</dbReference>
<dbReference type="InterPro" id="IPR017948">
    <property type="entry name" value="TGFb_CS"/>
</dbReference>
<dbReference type="PANTHER" id="PTHR11848">
    <property type="entry name" value="TGF-BETA FAMILY"/>
    <property type="match status" value="1"/>
</dbReference>
<dbReference type="PANTHER" id="PTHR11848:SF34">
    <property type="entry name" value="TRANSFORMING GROWTH FACTOR BETA-3 PROPROTEIN"/>
    <property type="match status" value="1"/>
</dbReference>
<dbReference type="Pfam" id="PF00019">
    <property type="entry name" value="TGF_beta"/>
    <property type="match status" value="1"/>
</dbReference>
<dbReference type="Pfam" id="PF00688">
    <property type="entry name" value="TGFb_propeptide"/>
    <property type="match status" value="1"/>
</dbReference>
<dbReference type="PIRSF" id="PIRSF001787">
    <property type="entry name" value="TGF-beta"/>
    <property type="match status" value="1"/>
</dbReference>
<dbReference type="PRINTS" id="PR01423">
    <property type="entry name" value="TGFBETA"/>
</dbReference>
<dbReference type="PRINTS" id="PR01426">
    <property type="entry name" value="TGFBETA3"/>
</dbReference>
<dbReference type="SMART" id="SM00204">
    <property type="entry name" value="TGFB"/>
    <property type="match status" value="1"/>
</dbReference>
<dbReference type="SUPFAM" id="SSF57501">
    <property type="entry name" value="Cystine-knot cytokines"/>
    <property type="match status" value="1"/>
</dbReference>
<dbReference type="PROSITE" id="PS00250">
    <property type="entry name" value="TGF_BETA_1"/>
    <property type="match status" value="1"/>
</dbReference>
<dbReference type="PROSITE" id="PS51362">
    <property type="entry name" value="TGF_BETA_2"/>
    <property type="match status" value="1"/>
</dbReference>
<proteinExistence type="evidence at transcript level"/>
<keyword id="KW-0165">Cleavage on pair of basic residues</keyword>
<keyword id="KW-1015">Disulfide bond</keyword>
<keyword id="KW-0272">Extracellular matrix</keyword>
<keyword id="KW-0325">Glycoprotein</keyword>
<keyword id="KW-0339">Growth factor</keyword>
<keyword id="KW-0488">Methylation</keyword>
<keyword id="KW-0497">Mitogen</keyword>
<keyword id="KW-1185">Reference proteome</keyword>
<keyword id="KW-0964">Secreted</keyword>
<keyword id="KW-0732">Signal</keyword>